<dbReference type="EMBL" id="AP009152">
    <property type="protein sequence ID" value="BAG29913.1"/>
    <property type="molecule type" value="Genomic_DNA"/>
</dbReference>
<dbReference type="RefSeq" id="WP_012398634.1">
    <property type="nucleotide sequence ID" value="NZ_VECX01000008.1"/>
</dbReference>
<dbReference type="SMR" id="B2GKF4"/>
<dbReference type="STRING" id="378753.KRH_15660"/>
<dbReference type="KEGG" id="krh:KRH_15660"/>
<dbReference type="eggNOG" id="COG0291">
    <property type="taxonomic scope" value="Bacteria"/>
</dbReference>
<dbReference type="HOGENOM" id="CLU_169643_4_2_11"/>
<dbReference type="OrthoDB" id="9804851at2"/>
<dbReference type="Proteomes" id="UP000008838">
    <property type="component" value="Chromosome"/>
</dbReference>
<dbReference type="GO" id="GO:0022625">
    <property type="term" value="C:cytosolic large ribosomal subunit"/>
    <property type="evidence" value="ECO:0007669"/>
    <property type="project" value="TreeGrafter"/>
</dbReference>
<dbReference type="GO" id="GO:0003735">
    <property type="term" value="F:structural constituent of ribosome"/>
    <property type="evidence" value="ECO:0007669"/>
    <property type="project" value="InterPro"/>
</dbReference>
<dbReference type="GO" id="GO:0006412">
    <property type="term" value="P:translation"/>
    <property type="evidence" value="ECO:0007669"/>
    <property type="project" value="UniProtKB-UniRule"/>
</dbReference>
<dbReference type="FunFam" id="4.10.410.60:FF:000001">
    <property type="entry name" value="50S ribosomal protein L35"/>
    <property type="match status" value="1"/>
</dbReference>
<dbReference type="Gene3D" id="4.10.410.60">
    <property type="match status" value="1"/>
</dbReference>
<dbReference type="HAMAP" id="MF_00514">
    <property type="entry name" value="Ribosomal_bL35"/>
    <property type="match status" value="1"/>
</dbReference>
<dbReference type="InterPro" id="IPR001706">
    <property type="entry name" value="Ribosomal_bL35"/>
</dbReference>
<dbReference type="InterPro" id="IPR021137">
    <property type="entry name" value="Ribosomal_bL35-like"/>
</dbReference>
<dbReference type="InterPro" id="IPR018265">
    <property type="entry name" value="Ribosomal_bL35_CS"/>
</dbReference>
<dbReference type="InterPro" id="IPR037229">
    <property type="entry name" value="Ribosomal_bL35_sf"/>
</dbReference>
<dbReference type="NCBIfam" id="TIGR00001">
    <property type="entry name" value="rpmI_bact"/>
    <property type="match status" value="1"/>
</dbReference>
<dbReference type="PANTHER" id="PTHR33343">
    <property type="entry name" value="54S RIBOSOMAL PROTEIN BL35M"/>
    <property type="match status" value="1"/>
</dbReference>
<dbReference type="PANTHER" id="PTHR33343:SF1">
    <property type="entry name" value="LARGE RIBOSOMAL SUBUNIT PROTEIN BL35M"/>
    <property type="match status" value="1"/>
</dbReference>
<dbReference type="Pfam" id="PF01632">
    <property type="entry name" value="Ribosomal_L35p"/>
    <property type="match status" value="1"/>
</dbReference>
<dbReference type="PRINTS" id="PR00064">
    <property type="entry name" value="RIBOSOMALL35"/>
</dbReference>
<dbReference type="SUPFAM" id="SSF143034">
    <property type="entry name" value="L35p-like"/>
    <property type="match status" value="1"/>
</dbReference>
<dbReference type="PROSITE" id="PS00936">
    <property type="entry name" value="RIBOSOMAL_L35"/>
    <property type="match status" value="1"/>
</dbReference>
<accession>B2GKF4</accession>
<feature type="chain" id="PRO_1000127365" description="Large ribosomal subunit protein bL35">
    <location>
        <begin position="1"/>
        <end position="65"/>
    </location>
</feature>
<feature type="region of interest" description="Disordered" evidence="2">
    <location>
        <begin position="1"/>
        <end position="29"/>
    </location>
</feature>
<proteinExistence type="inferred from homology"/>
<gene>
    <name evidence="1" type="primary">rpmI</name>
    <name type="ordered locus">KRH_15660</name>
</gene>
<reference key="1">
    <citation type="journal article" date="2008" name="J. Bacteriol.">
        <title>Complete genome sequence of the soil actinomycete Kocuria rhizophila.</title>
        <authorList>
            <person name="Takarada H."/>
            <person name="Sekine M."/>
            <person name="Kosugi H."/>
            <person name="Matsuo Y."/>
            <person name="Fujisawa T."/>
            <person name="Omata S."/>
            <person name="Kishi E."/>
            <person name="Shimizu A."/>
            <person name="Tsukatani N."/>
            <person name="Tanikawa S."/>
            <person name="Fujita N."/>
            <person name="Harayama S."/>
        </authorList>
    </citation>
    <scope>NUCLEOTIDE SEQUENCE [LARGE SCALE GENOMIC DNA]</scope>
    <source>
        <strain>ATCC 9341 / DSM 348 / NBRC 103217 / DC2201</strain>
    </source>
</reference>
<protein>
    <recommendedName>
        <fullName evidence="1">Large ribosomal subunit protein bL35</fullName>
    </recommendedName>
    <alternativeName>
        <fullName evidence="3">50S ribosomal protein L35</fullName>
    </alternativeName>
</protein>
<comment type="similarity">
    <text evidence="1">Belongs to the bacterial ribosomal protein bL35 family.</text>
</comment>
<evidence type="ECO:0000255" key="1">
    <source>
        <dbReference type="HAMAP-Rule" id="MF_00514"/>
    </source>
</evidence>
<evidence type="ECO:0000256" key="2">
    <source>
        <dbReference type="SAM" id="MobiDB-lite"/>
    </source>
</evidence>
<evidence type="ECO:0000305" key="3"/>
<name>RL35_KOCRD</name>
<sequence>MPKMKTHSGAKKRFKLTGSGKVKRQQANRRHYLEHKSSRLTRRLAGDQIVSTPGEAKAIKRMLGK</sequence>
<keyword id="KW-1185">Reference proteome</keyword>
<keyword id="KW-0687">Ribonucleoprotein</keyword>
<keyword id="KW-0689">Ribosomal protein</keyword>
<organism>
    <name type="scientific">Kocuria rhizophila (strain ATCC 9341 / DSM 348 / NBRC 103217 / DC2201)</name>
    <dbReference type="NCBI Taxonomy" id="378753"/>
    <lineage>
        <taxon>Bacteria</taxon>
        <taxon>Bacillati</taxon>
        <taxon>Actinomycetota</taxon>
        <taxon>Actinomycetes</taxon>
        <taxon>Micrococcales</taxon>
        <taxon>Micrococcaceae</taxon>
        <taxon>Kocuria</taxon>
    </lineage>
</organism>